<protein>
    <recommendedName>
        <fullName evidence="1">Endoribonuclease YbeY</fullName>
        <ecNumber evidence="1">3.1.-.-</ecNumber>
    </recommendedName>
</protein>
<dbReference type="EC" id="3.1.-.-" evidence="1"/>
<dbReference type="EMBL" id="CP000264">
    <property type="protein sequence ID" value="ABD53620.1"/>
    <property type="molecule type" value="Genomic_DNA"/>
</dbReference>
<dbReference type="RefSeq" id="WP_011453828.1">
    <property type="nucleotide sequence ID" value="NC_007802.1"/>
</dbReference>
<dbReference type="SMR" id="Q28UJ2"/>
<dbReference type="STRING" id="290400.Jann_0703"/>
<dbReference type="KEGG" id="jan:Jann_0703"/>
<dbReference type="eggNOG" id="COG0319">
    <property type="taxonomic scope" value="Bacteria"/>
</dbReference>
<dbReference type="HOGENOM" id="CLU_106710_0_0_5"/>
<dbReference type="OrthoDB" id="9807740at2"/>
<dbReference type="Proteomes" id="UP000008326">
    <property type="component" value="Chromosome"/>
</dbReference>
<dbReference type="GO" id="GO:0005737">
    <property type="term" value="C:cytoplasm"/>
    <property type="evidence" value="ECO:0007669"/>
    <property type="project" value="UniProtKB-SubCell"/>
</dbReference>
<dbReference type="GO" id="GO:0004222">
    <property type="term" value="F:metalloendopeptidase activity"/>
    <property type="evidence" value="ECO:0007669"/>
    <property type="project" value="InterPro"/>
</dbReference>
<dbReference type="GO" id="GO:0004521">
    <property type="term" value="F:RNA endonuclease activity"/>
    <property type="evidence" value="ECO:0007669"/>
    <property type="project" value="UniProtKB-UniRule"/>
</dbReference>
<dbReference type="GO" id="GO:0008270">
    <property type="term" value="F:zinc ion binding"/>
    <property type="evidence" value="ECO:0007669"/>
    <property type="project" value="UniProtKB-UniRule"/>
</dbReference>
<dbReference type="GO" id="GO:0006364">
    <property type="term" value="P:rRNA processing"/>
    <property type="evidence" value="ECO:0007669"/>
    <property type="project" value="UniProtKB-UniRule"/>
</dbReference>
<dbReference type="Gene3D" id="3.40.390.30">
    <property type="entry name" value="Metalloproteases ('zincins'), catalytic domain"/>
    <property type="match status" value="1"/>
</dbReference>
<dbReference type="HAMAP" id="MF_00009">
    <property type="entry name" value="Endoribonucl_YbeY"/>
    <property type="match status" value="1"/>
</dbReference>
<dbReference type="InterPro" id="IPR023091">
    <property type="entry name" value="MetalPrtase_cat_dom_sf_prd"/>
</dbReference>
<dbReference type="InterPro" id="IPR002036">
    <property type="entry name" value="YbeY"/>
</dbReference>
<dbReference type="NCBIfam" id="TIGR00043">
    <property type="entry name" value="rRNA maturation RNase YbeY"/>
    <property type="match status" value="1"/>
</dbReference>
<dbReference type="PANTHER" id="PTHR46986">
    <property type="entry name" value="ENDORIBONUCLEASE YBEY, CHLOROPLASTIC"/>
    <property type="match status" value="1"/>
</dbReference>
<dbReference type="PANTHER" id="PTHR46986:SF1">
    <property type="entry name" value="ENDORIBONUCLEASE YBEY, CHLOROPLASTIC"/>
    <property type="match status" value="1"/>
</dbReference>
<dbReference type="Pfam" id="PF02130">
    <property type="entry name" value="YbeY"/>
    <property type="match status" value="1"/>
</dbReference>
<dbReference type="SUPFAM" id="SSF55486">
    <property type="entry name" value="Metalloproteases ('zincins'), catalytic domain"/>
    <property type="match status" value="1"/>
</dbReference>
<proteinExistence type="inferred from homology"/>
<sequence>MEIDILIDAPHWDALDLCGLAQSACVATLTDLSLDPDDFALSILACDDARIATLNTQFRGKPTPTNVLSWPSEDRAPETPGAMPHLSDLAAELGDLALAFETCAREAADGGKPLPDHISHLIVHGLLHCLGFDHETDADADLMERLETRILARLGVPDPY</sequence>
<organism>
    <name type="scientific">Jannaschia sp. (strain CCS1)</name>
    <dbReference type="NCBI Taxonomy" id="290400"/>
    <lineage>
        <taxon>Bacteria</taxon>
        <taxon>Pseudomonadati</taxon>
        <taxon>Pseudomonadota</taxon>
        <taxon>Alphaproteobacteria</taxon>
        <taxon>Rhodobacterales</taxon>
        <taxon>Roseobacteraceae</taxon>
        <taxon>Jannaschia</taxon>
    </lineage>
</organism>
<keyword id="KW-0963">Cytoplasm</keyword>
<keyword id="KW-0255">Endonuclease</keyword>
<keyword id="KW-0378">Hydrolase</keyword>
<keyword id="KW-0479">Metal-binding</keyword>
<keyword id="KW-0540">Nuclease</keyword>
<keyword id="KW-1185">Reference proteome</keyword>
<keyword id="KW-0690">Ribosome biogenesis</keyword>
<keyword id="KW-0698">rRNA processing</keyword>
<keyword id="KW-0862">Zinc</keyword>
<name>YBEY_JANSC</name>
<comment type="function">
    <text evidence="1">Single strand-specific metallo-endoribonuclease involved in late-stage 70S ribosome quality control and in maturation of the 3' terminus of the 16S rRNA.</text>
</comment>
<comment type="cofactor">
    <cofactor evidence="1">
        <name>Zn(2+)</name>
        <dbReference type="ChEBI" id="CHEBI:29105"/>
    </cofactor>
    <text evidence="1">Binds 1 zinc ion.</text>
</comment>
<comment type="subcellular location">
    <subcellularLocation>
        <location evidence="1">Cytoplasm</location>
    </subcellularLocation>
</comment>
<comment type="similarity">
    <text evidence="1">Belongs to the endoribonuclease YbeY family.</text>
</comment>
<evidence type="ECO:0000255" key="1">
    <source>
        <dbReference type="HAMAP-Rule" id="MF_00009"/>
    </source>
</evidence>
<gene>
    <name evidence="1" type="primary">ybeY</name>
    <name type="ordered locus">Jann_0703</name>
</gene>
<reference key="1">
    <citation type="submission" date="2006-02" db="EMBL/GenBank/DDBJ databases">
        <title>Complete sequence of chromosome of Jannaschia sp. CCS1.</title>
        <authorList>
            <consortium name="US DOE Joint Genome Institute"/>
            <person name="Copeland A."/>
            <person name="Lucas S."/>
            <person name="Lapidus A."/>
            <person name="Barry K."/>
            <person name="Detter J.C."/>
            <person name="Glavina del Rio T."/>
            <person name="Hammon N."/>
            <person name="Israni S."/>
            <person name="Pitluck S."/>
            <person name="Brettin T."/>
            <person name="Bruce D."/>
            <person name="Han C."/>
            <person name="Tapia R."/>
            <person name="Gilna P."/>
            <person name="Chertkov O."/>
            <person name="Saunders E."/>
            <person name="Schmutz J."/>
            <person name="Larimer F."/>
            <person name="Land M."/>
            <person name="Kyrpides N."/>
            <person name="Lykidis A."/>
            <person name="Moran M.A."/>
            <person name="Belas R."/>
            <person name="Ye W."/>
            <person name="Buchan A."/>
            <person name="Gonzalez J.M."/>
            <person name="Schell M.A."/>
            <person name="Richardson P."/>
        </authorList>
    </citation>
    <scope>NUCLEOTIDE SEQUENCE [LARGE SCALE GENOMIC DNA]</scope>
    <source>
        <strain>CCS1</strain>
    </source>
</reference>
<accession>Q28UJ2</accession>
<feature type="chain" id="PRO_0000284222" description="Endoribonuclease YbeY">
    <location>
        <begin position="1"/>
        <end position="160"/>
    </location>
</feature>
<feature type="binding site" evidence="1">
    <location>
        <position position="124"/>
    </location>
    <ligand>
        <name>Zn(2+)</name>
        <dbReference type="ChEBI" id="CHEBI:29105"/>
        <note>catalytic</note>
    </ligand>
</feature>
<feature type="binding site" evidence="1">
    <location>
        <position position="128"/>
    </location>
    <ligand>
        <name>Zn(2+)</name>
        <dbReference type="ChEBI" id="CHEBI:29105"/>
        <note>catalytic</note>
    </ligand>
</feature>
<feature type="binding site" evidence="1">
    <location>
        <position position="134"/>
    </location>
    <ligand>
        <name>Zn(2+)</name>
        <dbReference type="ChEBI" id="CHEBI:29105"/>
        <note>catalytic</note>
    </ligand>
</feature>